<gene>
    <name evidence="4" type="primary">GID8</name>
    <name evidence="5" type="ordered locus">At1g61150</name>
    <name evidence="6" type="ORF">F11P17.12</name>
</gene>
<accession>Q84WK5</accession>
<accession>A8MQF1</accession>
<accession>O22730</accession>
<accession>Q3E7M2</accession>
<dbReference type="EMBL" id="AC002294">
    <property type="protein sequence ID" value="AAB71479.1"/>
    <property type="status" value="ALT_SEQ"/>
    <property type="molecule type" value="Genomic_DNA"/>
</dbReference>
<dbReference type="EMBL" id="CP002684">
    <property type="protein sequence ID" value="AEE33789.1"/>
    <property type="molecule type" value="Genomic_DNA"/>
</dbReference>
<dbReference type="EMBL" id="CP002684">
    <property type="protein sequence ID" value="AEE33791.1"/>
    <property type="molecule type" value="Genomic_DNA"/>
</dbReference>
<dbReference type="EMBL" id="CP002684">
    <property type="protein sequence ID" value="AEE33792.1"/>
    <property type="molecule type" value="Genomic_DNA"/>
</dbReference>
<dbReference type="EMBL" id="CP002684">
    <property type="protein sequence ID" value="AEE33794.1"/>
    <property type="molecule type" value="Genomic_DNA"/>
</dbReference>
<dbReference type="EMBL" id="CP002684">
    <property type="protein sequence ID" value="ANM60212.1"/>
    <property type="molecule type" value="Genomic_DNA"/>
</dbReference>
<dbReference type="EMBL" id="CP002684">
    <property type="protein sequence ID" value="ANM60213.1"/>
    <property type="molecule type" value="Genomic_DNA"/>
</dbReference>
<dbReference type="EMBL" id="CP002684">
    <property type="protein sequence ID" value="ANM60214.1"/>
    <property type="molecule type" value="Genomic_DNA"/>
</dbReference>
<dbReference type="EMBL" id="CP002684">
    <property type="protein sequence ID" value="ANM60215.1"/>
    <property type="molecule type" value="Genomic_DNA"/>
</dbReference>
<dbReference type="EMBL" id="BT003122">
    <property type="protein sequence ID" value="AAO24554.1"/>
    <property type="molecule type" value="mRNA"/>
</dbReference>
<dbReference type="EMBL" id="AK317144">
    <property type="protein sequence ID" value="BAH19830.1"/>
    <property type="molecule type" value="mRNA"/>
</dbReference>
<dbReference type="EMBL" id="AK228143">
    <property type="protein sequence ID" value="BAF00099.1"/>
    <property type="molecule type" value="mRNA"/>
</dbReference>
<dbReference type="PIR" id="D96637">
    <property type="entry name" value="D96637"/>
</dbReference>
<dbReference type="RefSeq" id="NP_001077750.1">
    <molecule id="Q84WK5-2"/>
    <property type="nucleotide sequence ID" value="NM_001084281.2"/>
</dbReference>
<dbReference type="RefSeq" id="NP_001077752.1">
    <molecule id="Q84WK5-2"/>
    <property type="nucleotide sequence ID" value="NM_001084283.2"/>
</dbReference>
<dbReference type="RefSeq" id="NP_001319279.1">
    <molecule id="Q84WK5-2"/>
    <property type="nucleotide sequence ID" value="NM_001333936.1"/>
</dbReference>
<dbReference type="RefSeq" id="NP_001322513.1">
    <molecule id="Q84WK5-1"/>
    <property type="nucleotide sequence ID" value="NM_001333935.1"/>
</dbReference>
<dbReference type="RefSeq" id="NP_001322514.1">
    <molecule id="Q84WK5-1"/>
    <property type="nucleotide sequence ID" value="NM_001333934.1"/>
</dbReference>
<dbReference type="RefSeq" id="NP_001322515.1">
    <molecule id="Q84WK5-2"/>
    <property type="nucleotide sequence ID" value="NM_001333937.1"/>
</dbReference>
<dbReference type="RefSeq" id="NP_176310.3">
    <molecule id="Q84WK5-1"/>
    <property type="nucleotide sequence ID" value="NM_104796.5"/>
</dbReference>
<dbReference type="RefSeq" id="NP_974061.1">
    <molecule id="Q84WK5-2"/>
    <property type="nucleotide sequence ID" value="NM_202332.3"/>
</dbReference>
<dbReference type="SMR" id="Q84WK5"/>
<dbReference type="FunCoup" id="Q84WK5">
    <property type="interactions" value="4512"/>
</dbReference>
<dbReference type="IntAct" id="Q84WK5">
    <property type="interactions" value="2"/>
</dbReference>
<dbReference type="STRING" id="3702.Q84WK5"/>
<dbReference type="iPTMnet" id="Q84WK5"/>
<dbReference type="PaxDb" id="3702-AT1G61150.1"/>
<dbReference type="ProteomicsDB" id="221889">
    <molecule id="Q84WK5-1"/>
</dbReference>
<dbReference type="EnsemblPlants" id="AT1G61150.1">
    <molecule id="Q84WK5-1"/>
    <property type="protein sequence ID" value="AT1G61150.1"/>
    <property type="gene ID" value="AT1G61150"/>
</dbReference>
<dbReference type="EnsemblPlants" id="AT1G61150.10">
    <molecule id="Q84WK5-1"/>
    <property type="protein sequence ID" value="AT1G61150.10"/>
    <property type="gene ID" value="AT1G61150"/>
</dbReference>
<dbReference type="EnsemblPlants" id="AT1G61150.11">
    <molecule id="Q84WK5-1"/>
    <property type="protein sequence ID" value="AT1G61150.11"/>
    <property type="gene ID" value="AT1G61150"/>
</dbReference>
<dbReference type="EnsemblPlants" id="AT1G61150.2">
    <molecule id="Q84WK5-2"/>
    <property type="protein sequence ID" value="AT1G61150.2"/>
    <property type="gene ID" value="AT1G61150"/>
</dbReference>
<dbReference type="EnsemblPlants" id="AT1G61150.4">
    <molecule id="Q84WK5-2"/>
    <property type="protein sequence ID" value="AT1G61150.4"/>
    <property type="gene ID" value="AT1G61150"/>
</dbReference>
<dbReference type="EnsemblPlants" id="AT1G61150.6">
    <molecule id="Q84WK5-2"/>
    <property type="protein sequence ID" value="AT1G61150.6"/>
    <property type="gene ID" value="AT1G61150"/>
</dbReference>
<dbReference type="EnsemblPlants" id="AT1G61150.8">
    <molecule id="Q84WK5-2"/>
    <property type="protein sequence ID" value="AT1G61150.8"/>
    <property type="gene ID" value="AT1G61150"/>
</dbReference>
<dbReference type="EnsemblPlants" id="AT1G61150.9">
    <molecule id="Q84WK5-2"/>
    <property type="protein sequence ID" value="AT1G61150.9"/>
    <property type="gene ID" value="AT1G61150"/>
</dbReference>
<dbReference type="GeneID" id="842408"/>
<dbReference type="Gramene" id="AT1G61150.1">
    <molecule id="Q84WK5-1"/>
    <property type="protein sequence ID" value="AT1G61150.1"/>
    <property type="gene ID" value="AT1G61150"/>
</dbReference>
<dbReference type="Gramene" id="AT1G61150.10">
    <molecule id="Q84WK5-1"/>
    <property type="protein sequence ID" value="AT1G61150.10"/>
    <property type="gene ID" value="AT1G61150"/>
</dbReference>
<dbReference type="Gramene" id="AT1G61150.11">
    <molecule id="Q84WK5-1"/>
    <property type="protein sequence ID" value="AT1G61150.11"/>
    <property type="gene ID" value="AT1G61150"/>
</dbReference>
<dbReference type="Gramene" id="AT1G61150.2">
    <molecule id="Q84WK5-2"/>
    <property type="protein sequence ID" value="AT1G61150.2"/>
    <property type="gene ID" value="AT1G61150"/>
</dbReference>
<dbReference type="Gramene" id="AT1G61150.4">
    <molecule id="Q84WK5-2"/>
    <property type="protein sequence ID" value="AT1G61150.4"/>
    <property type="gene ID" value="AT1G61150"/>
</dbReference>
<dbReference type="Gramene" id="AT1G61150.6">
    <molecule id="Q84WK5-2"/>
    <property type="protein sequence ID" value="AT1G61150.6"/>
    <property type="gene ID" value="AT1G61150"/>
</dbReference>
<dbReference type="Gramene" id="AT1G61150.8">
    <molecule id="Q84WK5-2"/>
    <property type="protein sequence ID" value="AT1G61150.8"/>
    <property type="gene ID" value="AT1G61150"/>
</dbReference>
<dbReference type="Gramene" id="AT1G61150.9">
    <molecule id="Q84WK5-2"/>
    <property type="protein sequence ID" value="AT1G61150.9"/>
    <property type="gene ID" value="AT1G61150"/>
</dbReference>
<dbReference type="KEGG" id="ath:AT1G61150"/>
<dbReference type="Araport" id="AT1G61150"/>
<dbReference type="TAIR" id="AT1G61150"/>
<dbReference type="eggNOG" id="KOG2659">
    <property type="taxonomic scope" value="Eukaryota"/>
</dbReference>
<dbReference type="HOGENOM" id="CLU_073203_1_0_1"/>
<dbReference type="InParanoid" id="Q84WK5"/>
<dbReference type="PhylomeDB" id="Q84WK5"/>
<dbReference type="PRO" id="PR:Q84WK5"/>
<dbReference type="Proteomes" id="UP000006548">
    <property type="component" value="Chromosome 1"/>
</dbReference>
<dbReference type="ExpressionAtlas" id="Q84WK5">
    <property type="expression patterns" value="baseline and differential"/>
</dbReference>
<dbReference type="GO" id="GO:0005737">
    <property type="term" value="C:cytoplasm"/>
    <property type="evidence" value="ECO:0000314"/>
    <property type="project" value="UniProtKB"/>
</dbReference>
<dbReference type="GO" id="GO:0005634">
    <property type="term" value="C:nucleus"/>
    <property type="evidence" value="ECO:0007005"/>
    <property type="project" value="TAIR"/>
</dbReference>
<dbReference type="InterPro" id="IPR013144">
    <property type="entry name" value="CRA_dom"/>
</dbReference>
<dbReference type="InterPro" id="IPR024964">
    <property type="entry name" value="CTLH/CRA"/>
</dbReference>
<dbReference type="InterPro" id="IPR006595">
    <property type="entry name" value="CTLH_C"/>
</dbReference>
<dbReference type="InterPro" id="IPR006594">
    <property type="entry name" value="LisH"/>
</dbReference>
<dbReference type="InterPro" id="IPR050618">
    <property type="entry name" value="Ubq-SigPath_Reg"/>
</dbReference>
<dbReference type="PANTHER" id="PTHR12864">
    <property type="entry name" value="RAN BINDING PROTEIN 9-RELATED"/>
    <property type="match status" value="1"/>
</dbReference>
<dbReference type="Pfam" id="PF10607">
    <property type="entry name" value="CTLH"/>
    <property type="match status" value="1"/>
</dbReference>
<dbReference type="Pfam" id="PF08513">
    <property type="entry name" value="LisH"/>
    <property type="match status" value="1"/>
</dbReference>
<dbReference type="SMART" id="SM00757">
    <property type="entry name" value="CRA"/>
    <property type="match status" value="1"/>
</dbReference>
<dbReference type="SMART" id="SM00668">
    <property type="entry name" value="CTLH"/>
    <property type="match status" value="1"/>
</dbReference>
<dbReference type="SMART" id="SM00667">
    <property type="entry name" value="LisH"/>
    <property type="match status" value="1"/>
</dbReference>
<dbReference type="PROSITE" id="PS50897">
    <property type="entry name" value="CTLH"/>
    <property type="match status" value="1"/>
</dbReference>
<dbReference type="PROSITE" id="PS50896">
    <property type="entry name" value="LISH"/>
    <property type="match status" value="1"/>
</dbReference>
<name>GID8_ARATH</name>
<feature type="chain" id="PRO_0000442060" description="Protein GID8 homolog">
    <location>
        <begin position="1"/>
        <end position="243"/>
    </location>
</feature>
<feature type="domain" description="LisH" evidence="2">
    <location>
        <begin position="40"/>
        <end position="72"/>
    </location>
</feature>
<feature type="domain" description="CTLH" evidence="1">
    <location>
        <begin position="78"/>
        <end position="135"/>
    </location>
</feature>
<feature type="splice variant" id="VSP_059164" description="In isoform 2.">
    <location>
        <begin position="1"/>
        <end position="17"/>
    </location>
</feature>
<comment type="subunit">
    <text evidence="3">Interacts with RANBPM.</text>
</comment>
<comment type="interaction">
    <interactant intactId="EBI-4466510">
        <id>Q84WK5</id>
    </interactant>
    <interactant intactId="EBI-25512239">
        <id>Q9ZR37</id>
        <label>DSPTP1</label>
    </interactant>
    <organismsDiffer>false</organismsDiffer>
    <experiments>3</experiments>
</comment>
<comment type="subcellular location">
    <subcellularLocation>
        <location evidence="3">Cytoplasm</location>
    </subcellularLocation>
    <text evidence="3">Associates predominantly in the form of large cytoplasmic complexes.</text>
</comment>
<comment type="alternative products">
    <event type="alternative splicing"/>
    <isoform>
        <id>Q84WK5-1</id>
        <name>1</name>
        <sequence type="displayed"/>
    </isoform>
    <isoform>
        <id>Q84WK5-2</id>
        <name>2</name>
        <sequence type="described" ref="VSP_059164"/>
    </isoform>
</comment>
<comment type="similarity">
    <text evidence="4">Belongs to the GID8 family.</text>
</comment>
<comment type="sequence caution" evidence="4">
    <conflict type="erroneous gene model prediction">
        <sequence resource="EMBL-CDS" id="AAB71479"/>
    </conflict>
</comment>
<organism>
    <name type="scientific">Arabidopsis thaliana</name>
    <name type="common">Mouse-ear cress</name>
    <dbReference type="NCBI Taxonomy" id="3702"/>
    <lineage>
        <taxon>Eukaryota</taxon>
        <taxon>Viridiplantae</taxon>
        <taxon>Streptophyta</taxon>
        <taxon>Embryophyta</taxon>
        <taxon>Tracheophyta</taxon>
        <taxon>Spermatophyta</taxon>
        <taxon>Magnoliopsida</taxon>
        <taxon>eudicotyledons</taxon>
        <taxon>Gunneridae</taxon>
        <taxon>Pentapetalae</taxon>
        <taxon>rosids</taxon>
        <taxon>malvids</taxon>
        <taxon>Brassicales</taxon>
        <taxon>Brassicaceae</taxon>
        <taxon>Camelineae</taxon>
        <taxon>Arabidopsis</taxon>
    </lineage>
</organism>
<sequence length="243" mass="27786">MSLFRIFINQLEEDDEDMATSKKMITREEWEKKLNAVKLRKEDMNTLVMNFLVTEGYVEAAEKFQRESGTKPEIDLATITDRMAVKKAVQNGNVEDAIEKVNDLNPEILDTNPELFFHLQQQRLIELIRQGKTEEALEFAQEELAPRGEENQAFLEELEKTVALLVFDDASTCPVKELLDLSHRLKTASEVNAAILTSQSHEKDPKLPSLLKMLIWAQTQLDEKAVYPHINDLSTGKLEDPSE</sequence>
<protein>
    <recommendedName>
        <fullName evidence="4">Protein GID8 homolog</fullName>
    </recommendedName>
</protein>
<evidence type="ECO:0000255" key="1">
    <source>
        <dbReference type="PROSITE-ProRule" id="PRU00058"/>
    </source>
</evidence>
<evidence type="ECO:0000255" key="2">
    <source>
        <dbReference type="PROSITE-ProRule" id="PRU00126"/>
    </source>
</evidence>
<evidence type="ECO:0000269" key="3">
    <source>
    </source>
</evidence>
<evidence type="ECO:0000305" key="4"/>
<evidence type="ECO:0000312" key="5">
    <source>
        <dbReference type="Araport" id="AT1G61150"/>
    </source>
</evidence>
<evidence type="ECO:0000312" key="6">
    <source>
        <dbReference type="EMBL" id="AAB71479.1"/>
    </source>
</evidence>
<keyword id="KW-0025">Alternative splicing</keyword>
<keyword id="KW-0963">Cytoplasm</keyword>
<keyword id="KW-1185">Reference proteome</keyword>
<reference key="1">
    <citation type="journal article" date="2000" name="Nature">
        <title>Sequence and analysis of chromosome 1 of the plant Arabidopsis thaliana.</title>
        <authorList>
            <person name="Theologis A."/>
            <person name="Ecker J.R."/>
            <person name="Palm C.J."/>
            <person name="Federspiel N.A."/>
            <person name="Kaul S."/>
            <person name="White O."/>
            <person name="Alonso J."/>
            <person name="Altafi H."/>
            <person name="Araujo R."/>
            <person name="Bowman C.L."/>
            <person name="Brooks S.Y."/>
            <person name="Buehler E."/>
            <person name="Chan A."/>
            <person name="Chao Q."/>
            <person name="Chen H."/>
            <person name="Cheuk R.F."/>
            <person name="Chin C.W."/>
            <person name="Chung M.K."/>
            <person name="Conn L."/>
            <person name="Conway A.B."/>
            <person name="Conway A.R."/>
            <person name="Creasy T.H."/>
            <person name="Dewar K."/>
            <person name="Dunn P."/>
            <person name="Etgu P."/>
            <person name="Feldblyum T.V."/>
            <person name="Feng J.-D."/>
            <person name="Fong B."/>
            <person name="Fujii C.Y."/>
            <person name="Gill J.E."/>
            <person name="Goldsmith A.D."/>
            <person name="Haas B."/>
            <person name="Hansen N.F."/>
            <person name="Hughes B."/>
            <person name="Huizar L."/>
            <person name="Hunter J.L."/>
            <person name="Jenkins J."/>
            <person name="Johnson-Hopson C."/>
            <person name="Khan S."/>
            <person name="Khaykin E."/>
            <person name="Kim C.J."/>
            <person name="Koo H.L."/>
            <person name="Kremenetskaia I."/>
            <person name="Kurtz D.B."/>
            <person name="Kwan A."/>
            <person name="Lam B."/>
            <person name="Langin-Hooper S."/>
            <person name="Lee A."/>
            <person name="Lee J.M."/>
            <person name="Lenz C.A."/>
            <person name="Li J.H."/>
            <person name="Li Y.-P."/>
            <person name="Lin X."/>
            <person name="Liu S.X."/>
            <person name="Liu Z.A."/>
            <person name="Luros J.S."/>
            <person name="Maiti R."/>
            <person name="Marziali A."/>
            <person name="Militscher J."/>
            <person name="Miranda M."/>
            <person name="Nguyen M."/>
            <person name="Nierman W.C."/>
            <person name="Osborne B.I."/>
            <person name="Pai G."/>
            <person name="Peterson J."/>
            <person name="Pham P.K."/>
            <person name="Rizzo M."/>
            <person name="Rooney T."/>
            <person name="Rowley D."/>
            <person name="Sakano H."/>
            <person name="Salzberg S.L."/>
            <person name="Schwartz J.R."/>
            <person name="Shinn P."/>
            <person name="Southwick A.M."/>
            <person name="Sun H."/>
            <person name="Tallon L.J."/>
            <person name="Tambunga G."/>
            <person name="Toriumi M.J."/>
            <person name="Town C.D."/>
            <person name="Utterback T."/>
            <person name="Van Aken S."/>
            <person name="Vaysberg M."/>
            <person name="Vysotskaia V.S."/>
            <person name="Walker M."/>
            <person name="Wu D."/>
            <person name="Yu G."/>
            <person name="Fraser C.M."/>
            <person name="Venter J.C."/>
            <person name="Davis R.W."/>
        </authorList>
    </citation>
    <scope>NUCLEOTIDE SEQUENCE [LARGE SCALE GENOMIC DNA]</scope>
    <source>
        <strain>cv. Columbia</strain>
    </source>
</reference>
<reference key="2">
    <citation type="journal article" date="2017" name="Plant J.">
        <title>Araport11: a complete reannotation of the Arabidopsis thaliana reference genome.</title>
        <authorList>
            <person name="Cheng C.Y."/>
            <person name="Krishnakumar V."/>
            <person name="Chan A.P."/>
            <person name="Thibaud-Nissen F."/>
            <person name="Schobel S."/>
            <person name="Town C.D."/>
        </authorList>
    </citation>
    <scope>GENOME REANNOTATION</scope>
    <source>
        <strain>cv. Columbia</strain>
    </source>
</reference>
<reference key="3">
    <citation type="journal article" date="2003" name="Science">
        <title>Empirical analysis of transcriptional activity in the Arabidopsis genome.</title>
        <authorList>
            <person name="Yamada K."/>
            <person name="Lim J."/>
            <person name="Dale J.M."/>
            <person name="Chen H."/>
            <person name="Shinn P."/>
            <person name="Palm C.J."/>
            <person name="Southwick A.M."/>
            <person name="Wu H.C."/>
            <person name="Kim C.J."/>
            <person name="Nguyen M."/>
            <person name="Pham P.K."/>
            <person name="Cheuk R.F."/>
            <person name="Karlin-Newmann G."/>
            <person name="Liu S.X."/>
            <person name="Lam B."/>
            <person name="Sakano H."/>
            <person name="Wu T."/>
            <person name="Yu G."/>
            <person name="Miranda M."/>
            <person name="Quach H.L."/>
            <person name="Tripp M."/>
            <person name="Chang C.H."/>
            <person name="Lee J.M."/>
            <person name="Toriumi M.J."/>
            <person name="Chan M.M."/>
            <person name="Tang C.C."/>
            <person name="Onodera C.S."/>
            <person name="Deng J.M."/>
            <person name="Akiyama K."/>
            <person name="Ansari Y."/>
            <person name="Arakawa T."/>
            <person name="Banh J."/>
            <person name="Banno F."/>
            <person name="Bowser L."/>
            <person name="Brooks S.Y."/>
            <person name="Carninci P."/>
            <person name="Chao Q."/>
            <person name="Choy N."/>
            <person name="Enju A."/>
            <person name="Goldsmith A.D."/>
            <person name="Gurjal M."/>
            <person name="Hansen N.F."/>
            <person name="Hayashizaki Y."/>
            <person name="Johnson-Hopson C."/>
            <person name="Hsuan V.W."/>
            <person name="Iida K."/>
            <person name="Karnes M."/>
            <person name="Khan S."/>
            <person name="Koesema E."/>
            <person name="Ishida J."/>
            <person name="Jiang P.X."/>
            <person name="Jones T."/>
            <person name="Kawai J."/>
            <person name="Kamiya A."/>
            <person name="Meyers C."/>
            <person name="Nakajima M."/>
            <person name="Narusaka M."/>
            <person name="Seki M."/>
            <person name="Sakurai T."/>
            <person name="Satou M."/>
            <person name="Tamse R."/>
            <person name="Vaysberg M."/>
            <person name="Wallender E.K."/>
            <person name="Wong C."/>
            <person name="Yamamura Y."/>
            <person name="Yuan S."/>
            <person name="Shinozaki K."/>
            <person name="Davis R.W."/>
            <person name="Theologis A."/>
            <person name="Ecker J.R."/>
        </authorList>
    </citation>
    <scope>NUCLEOTIDE SEQUENCE [LARGE SCALE MRNA] (ISOFORM 1)</scope>
    <source>
        <strain>cv. Columbia</strain>
    </source>
</reference>
<reference key="4">
    <citation type="journal article" date="2009" name="DNA Res.">
        <title>Analysis of multiple occurrences of alternative splicing events in Arabidopsis thaliana using novel sequenced full-length cDNAs.</title>
        <authorList>
            <person name="Iida K."/>
            <person name="Fukami-Kobayashi K."/>
            <person name="Toyoda A."/>
            <person name="Sakaki Y."/>
            <person name="Kobayashi M."/>
            <person name="Seki M."/>
            <person name="Shinozaki K."/>
        </authorList>
    </citation>
    <scope>NUCLEOTIDE SEQUENCE [LARGE SCALE MRNA] (ISOFORM 2)</scope>
    <source>
        <strain>cv. Columbia</strain>
    </source>
</reference>
<reference key="5">
    <citation type="submission" date="2006-07" db="EMBL/GenBank/DDBJ databases">
        <title>Large-scale analysis of RIKEN Arabidopsis full-length (RAFL) cDNAs.</title>
        <authorList>
            <person name="Totoki Y."/>
            <person name="Seki M."/>
            <person name="Ishida J."/>
            <person name="Nakajima M."/>
            <person name="Enju A."/>
            <person name="Kamiya A."/>
            <person name="Narusaka M."/>
            <person name="Shin-i T."/>
            <person name="Nakagawa M."/>
            <person name="Sakamoto N."/>
            <person name="Oishi K."/>
            <person name="Kohara Y."/>
            <person name="Kobayashi M."/>
            <person name="Toyoda A."/>
            <person name="Sakaki Y."/>
            <person name="Sakurai T."/>
            <person name="Iida K."/>
            <person name="Akiyama K."/>
            <person name="Satou M."/>
            <person name="Toyoda T."/>
            <person name="Konagaya A."/>
            <person name="Carninci P."/>
            <person name="Kawai J."/>
            <person name="Hayashizaki Y."/>
            <person name="Shinozaki K."/>
        </authorList>
    </citation>
    <scope>NUCLEOTIDE SEQUENCE [LARGE SCALE MRNA] (ISOFORM 1)</scope>
    <source>
        <strain>cv. Columbia</strain>
    </source>
</reference>
<reference key="6">
    <citation type="journal article" date="2012" name="BMC Plant Biol.">
        <title>Interactions of an Arabidopsis RanBPM homologue with LisH-CTLH domain proteins revealed high conservation of CTLH complexes in eukaryotes.</title>
        <authorList>
            <person name="Tomastikova E."/>
            <person name="Cenklova V."/>
            <person name="Kohoutova L."/>
            <person name="Petrovska B."/>
            <person name="Vachova L."/>
            <person name="Halada P."/>
            <person name="Kocarova G."/>
            <person name="Binarova P."/>
        </authorList>
    </citation>
    <scope>IDENTIFICATION BY MASS SPECTROMETRY</scope>
    <scope>INTERACTION WITH RANBPM</scope>
    <scope>SUBCELLULAR LOCATION</scope>
</reference>
<proteinExistence type="evidence at protein level"/>